<evidence type="ECO:0000255" key="1"/>
<evidence type="ECO:0000255" key="2">
    <source>
        <dbReference type="PROSITE-ProRule" id="PRU01032"/>
    </source>
</evidence>
<evidence type="ECO:0000256" key="3">
    <source>
        <dbReference type="SAM" id="MobiDB-lite"/>
    </source>
</evidence>
<evidence type="ECO:0000269" key="4">
    <source>
    </source>
</evidence>
<evidence type="ECO:0000269" key="5">
    <source>
    </source>
</evidence>
<evidence type="ECO:0000269" key="6">
    <source>
    </source>
</evidence>
<evidence type="ECO:0000269" key="7">
    <source>
    </source>
</evidence>
<evidence type="ECO:0000269" key="8">
    <source>
    </source>
</evidence>
<evidence type="ECO:0000269" key="9">
    <source>
    </source>
</evidence>
<evidence type="ECO:0000269" key="10">
    <source>
    </source>
</evidence>
<evidence type="ECO:0000303" key="11">
    <source>
    </source>
</evidence>
<evidence type="ECO:0000303" key="12">
    <source>
    </source>
</evidence>
<evidence type="ECO:0000303" key="13">
    <source>
    </source>
</evidence>
<evidence type="ECO:0000303" key="14">
    <source>
    </source>
</evidence>
<evidence type="ECO:0000305" key="15">
    <source>
    </source>
</evidence>
<evidence type="ECO:0000305" key="16">
    <source>
    </source>
</evidence>
<evidence type="ECO:0000305" key="17">
    <source>
    </source>
</evidence>
<evidence type="ECO:0000305" key="18">
    <source>
    </source>
</evidence>
<evidence type="ECO:0007744" key="19">
    <source>
        <dbReference type="PDB" id="1GA4"/>
    </source>
</evidence>
<evidence type="ECO:0007744" key="20">
    <source>
        <dbReference type="PDB" id="1GA6"/>
    </source>
</evidence>
<evidence type="ECO:0007744" key="21">
    <source>
        <dbReference type="PDB" id="1NLU"/>
    </source>
</evidence>
<evidence type="ECO:0007744" key="22">
    <source>
        <dbReference type="PDB" id="6M8W"/>
    </source>
</evidence>
<evidence type="ECO:0007744" key="23">
    <source>
        <dbReference type="PDB" id="6M8Y"/>
    </source>
</evidence>
<evidence type="ECO:0007744" key="24">
    <source>
        <dbReference type="PDB" id="6M9C"/>
    </source>
</evidence>
<evidence type="ECO:0007744" key="25">
    <source>
        <dbReference type="PDB" id="6M9D"/>
    </source>
</evidence>
<evidence type="ECO:0007744" key="26">
    <source>
        <dbReference type="PDB" id="6M9F"/>
    </source>
</evidence>
<evidence type="ECO:0007829" key="27">
    <source>
        <dbReference type="PDB" id="1GA6"/>
    </source>
</evidence>
<evidence type="ECO:0007829" key="28">
    <source>
        <dbReference type="PDB" id="6M8W"/>
    </source>
</evidence>
<name>PICP_PSESR</name>
<reference key="1">
    <citation type="journal article" date="1994" name="J. Biol. Chem.">
        <title>Cloning, nucleotide sequence, and expression of an isovaleryl pepstatin-insensitive carboxyl proteinase gene from Pseudomonas sp. 101.</title>
        <authorList>
            <person name="Oda K."/>
            <person name="Takahashi T."/>
            <person name="Tokuda Y."/>
            <person name="Shibano Y."/>
            <person name="Takahashi S."/>
        </authorList>
    </citation>
    <scope>NUCLEOTIDE SEQUENCE [GENOMIC DNA]</scope>
    <scope>PROTEIN SEQUENCE OF 216-224</scope>
    <source>
        <strain>101</strain>
    </source>
</reference>
<reference key="2">
    <citation type="journal article" date="1995" name="J. Biochem.">
        <title>The primary structure of pepstatin-insensitive carboxyl proteinase produced by Pseudomonas sp. No. 101.</title>
        <authorList>
            <person name="Hayashi K."/>
            <person name="Izu H."/>
            <person name="Oda K."/>
            <person name="Fukuhara K."/>
            <person name="Matsuo M."/>
            <person name="Takano R."/>
            <person name="Hara S."/>
        </authorList>
    </citation>
    <scope>PROTEIN SEQUENCE OF 216-585</scope>
    <source>
        <strain>101</strain>
    </source>
</reference>
<reference key="3">
    <citation type="journal article" date="1987" name="Biochim. Biophys. Acta">
        <title>Purification and properties of a pepstatin-insensitive carboxyl proteinase from a gram-negative bacterium.</title>
        <authorList>
            <person name="Oda K."/>
            <person name="Sugitani M."/>
            <person name="Fukuhara K."/>
            <person name="Murao S."/>
        </authorList>
    </citation>
    <scope>FUNCTION</scope>
    <scope>ACTIVITY REGULATION</scope>
    <scope>BIOPHYSICOCHEMICAL PROPERTIES</scope>
    <source>
        <strain>101</strain>
    </source>
</reference>
<reference key="4">
    <citation type="journal article" date="1992" name="Biochim. Biophys. Acta">
        <title>Substrate specificity and kinetic properties of pepstatin-insensitive carboxyl proteinase from Pseudomonas sp. No. 101.</title>
        <authorList>
            <person name="Oda K."/>
            <person name="Nakatani H."/>
            <person name="Dunn B.M."/>
        </authorList>
    </citation>
    <scope>FUNCTION</scope>
    <scope>ACTIVITY REGULATION</scope>
    <scope>BIOPHYSICOCHEMICAL PROPERTIES</scope>
    <source>
        <strain>101</strain>
    </source>
</reference>
<reference key="5">
    <citation type="journal article" date="1999" name="J. Biol. Chem.">
        <title>Identification of catalytic residues of pepstatin-insensitive carboxyl proteinases from prokaryotes by site-directed mutagenesis.</title>
        <authorList>
            <person name="Oyama H."/>
            <person name="Abe S."/>
            <person name="Ushiyama S."/>
            <person name="Takahashi S."/>
            <person name="Oda K."/>
        </authorList>
    </citation>
    <scope>FUNCTION</scope>
    <scope>BIOPHYSICOCHEMICAL PROPERTIES</scope>
    <scope>PROTEOLYTIC CLEAVAGE</scope>
    <scope>MUTAGENESIS OF ASP-299; ASP-339; ASP-385; GLU-432; GLU-437; ASP-440; ASP-480 AND ASP-543</scope>
</reference>
<reference evidence="22 23 24 25 26" key="6">
    <citation type="journal article" date="2001" name="Biochemistry">
        <title>Inhibitor complexes of the Pseudomonas serine-carboxyl proteinase.</title>
        <authorList>
            <person name="Wlodawer A."/>
            <person name="Li M."/>
            <person name="Gustchina A."/>
            <person name="Dauter Z."/>
            <person name="Uchida K."/>
            <person name="Oyama H."/>
            <person name="Goldfarb N.E."/>
            <person name="Dunn B.M."/>
            <person name="Oda K."/>
        </authorList>
    </citation>
    <scope>X-RAY CRYSTALLOGRAPHY (1.10 ANGSTROMS) OF 217-585 IN COMPLEXES WITH CA(2+) AND INHIBITORS</scope>
    <scope>COFACTOR</scope>
    <scope>ACTIVITY REGULATION</scope>
    <scope>ACTIVE SITE</scope>
    <scope>DISULFIDE BOND</scope>
    <source>
        <strain>101</strain>
    </source>
</reference>
<reference evidence="19 20" key="7">
    <citation type="journal article" date="2001" name="Nat. Struct. Biol.">
        <title>Carboxyl proteinase from Pseudomonas defines a novel family of subtilisin-like enzymes.</title>
        <authorList>
            <person name="Wlodawer A."/>
            <person name="Li M."/>
            <person name="Dauter Z."/>
            <person name="Gustchina A."/>
            <person name="Uchida K."/>
            <person name="Oyama H."/>
            <person name="Dunn B.M."/>
            <person name="Oda K."/>
        </authorList>
    </citation>
    <scope>X-RAY CRYSTALLOGRAPHY (1.00 ANGSTROMS) OF 216-587 IN COMPLEXES WITH CA(2+) AND INHIBITORS</scope>
    <scope>COFACTOR</scope>
    <scope>ACTIVE SITE</scope>
    <scope>DISULFIDE BOND</scope>
</reference>
<reference evidence="21" key="8">
    <citation type="journal article" date="2004" name="Biochem. Biophys. Res. Commun.">
        <title>Two inhibitor molecules bound in the active site of Pseudomonas sedolisin: a model for the bi-product complex following cleavage of a peptide substrate.</title>
        <authorList>
            <person name="Wlodawer A."/>
            <person name="Li M."/>
            <person name="Gustchina A."/>
            <person name="Oyama H."/>
            <person name="Oda K."/>
            <person name="Beyer B.B."/>
            <person name="Clemente J."/>
            <person name="Dunn B.M."/>
        </authorList>
    </citation>
    <scope>X-RAY CRYSTALLOGRAPHY (1.3 ANGSTROMS) OF 216-585 IN COMPLEX WITH CA(2+) AND INHIBITOR</scope>
    <scope>FUNCTION</scope>
    <scope>ACTIVITY REGULATION</scope>
    <scope>BIOPHYSICOCHEMICAL PROPERTIES</scope>
    <scope>DISULFIDE BOND</scope>
</reference>
<protein>
    <recommendedName>
        <fullName evidence="12">Sedolisin</fullName>
        <ecNumber>3.4.21.100</ecNumber>
    </recommendedName>
    <alternativeName>
        <fullName evidence="14">PCP</fullName>
    </alternativeName>
    <alternativeName>
        <fullName evidence="13">Pepstatin-insensitive carboxyl proteinase</fullName>
        <shortName evidence="11">PSCP</shortName>
    </alternativeName>
    <alternativeName>
        <fullName>Pseudomonalisin</fullName>
    </alternativeName>
    <alternativeName>
        <fullName>Pseudomonapepsin</fullName>
    </alternativeName>
</protein>
<comment type="function">
    <text evidence="4 7 8 9">Pepstatin-insensitive serine-carboxyl proteinase (PubMed:10488127, PubMed:1562589, PubMed:3548827). In vitro can hydrolyze various synthetic peptides (PubMed:10488127, PubMed:14733955, PubMed:1562589). Also shows activity on acid-denatured hemoglobin and on casein (PubMed:10488127, PubMed:3548827).</text>
</comment>
<comment type="catalytic activity">
    <reaction>
        <text>Hydrolysis of the B chain of insulin at 13-Glu-|-Ala-14, 15-Leu-|-Tyr-16 and 25-Phe-|-Tyr-26 and angiotensin I at 4-Tyr-|-Ile-5. A good synthetic substrate is Lys-Pro-Ile-Glu-Phe-|-Phe(NO2)-Arg-Leu.</text>
        <dbReference type="EC" id="3.4.21.100"/>
    </reaction>
</comment>
<comment type="cofactor">
    <cofactor evidence="5 6">
        <name>Ca(2+)</name>
        <dbReference type="ChEBI" id="CHEBI:29108"/>
    </cofactor>
    <text evidence="5 6">Binds 1 Ca(2+) ion per subunit.</text>
</comment>
<comment type="activity regulation">
    <text evidence="6 7 8 9">Inhibited by 1,2-epoxy-3-(p-nitrophenoxy)propane (EPNP), but not by carboxyl proteinase inhibitors, such as pepstatin, pepstatin Ac (S-PI) and diazoacetyl-DL-norleucine methyl ester (DAN) (PubMed:3548827). Inhibited by tyrostatin, pseudo-tyrostatin, AcIPF, AcIAF, chymostatin and pseudo-iodotyrostatin (PubMed:11747435, PubMed:14733955, PubMed:1562589).</text>
</comment>
<comment type="biophysicochemical properties">
    <kinetics>
        <KM evidence="4">7.4 uM for Lys-Pro-Ala-Leu-Phe-p-nitrophenylalanine-Arg-Leu</KM>
        <KM evidence="8">95 uM for Lys-Pro-Ala-Lys-Phe-(4-nitro)Phe-Arg-Leu</KM>
        <KM evidence="8">60 uM for Lys-Pro-Ala-Lys-Leu-(4-nitro)Phe-Arg-Leu</KM>
        <KM evidence="8">13 uM for Lys-Pro-Ala-Asp-Phe-(4-nitro)Phe-Arg-Leu</KM>
        <KM evidence="8">3 uM for Lys-Pro-Ile-Glu-Phe-(4-nitro)Phe-Arg-Leu</KM>
        <KM evidence="8">52 uM for Lys-Pro-Asn-Glu-Phe-(4-nitro)Phe-Arg-Leu</KM>
        <KM evidence="8">19 uM for Lys-Pro-Val-Ser-Tyr-(4-nitro)Phe-Arg-Leu</KM>
        <KM evidence="8">68 uM for Lys-Pro-Ala-Lys-Phe-(4-nitro)Phe-Asp-Leu</KM>
        <KM evidence="7">0.12 uM for MCA-Lys-Pro-Pro-Leu-Glu-Tyr-Arg-Leu-Gly-Lys(DNP)-Gly</KM>
        <text evidence="4 7 8">kcat is 59.3 sec(-1) with Lys-Pro-Ala-Leu-Phe-p-nitrophenylalanine-Arg-Leu as substrate (PubMed:10488127). kcat is 14.5 sec(-1) with Lys-Pro-Ala-Lys-Phe-(4-nitro)Phe-Arg-Leu as substrate (PubMed:1562589). kcat is 5.5 sec(-1) with Lys-Pro-Ala-Lys-Leu-(4-nitro)Phe-Arg-Leu as substrate (PubMed:1562589). kcat is 6.8 sec(-1) with Lys-Pro-Ala-Asp-Phe-(4-nitro)Phe-Arg-Leu as substrate (PubMed:1562589). kcat is 6.9 sec(-1) with Lys-Pro-Ile-Glu-Phe-(4-nitro)Phe-Arg-Leu as substrate (PubMed:1562589). kcat is 5.5 sec(-1) with Lys-Pro-Asn-Glu-Phe-(4-nitro)Phe-Arg-Leu as substrate (PubMed:1562589). kcat is 5.2 sec(-1) with Lys-Pro-Val-Ser-Tyr-(4-nitro)Phe-Arg-Leu as substrate (PubMed:1562589). kcat is 6.9 sec(-1) with Lys-Pro-Ala-Lys-Phe-(4-nitro)Phe-Asp-Leu as substrate (PubMed:1562589). kcat is 73 sec(-1) with MCA-Lys-Pro-Pro-Leu-Glu-Tyr-Arg-Leu-Gly-Lys(DNP)-Gly as substrate (PubMed:14733955).</text>
    </kinetics>
    <phDependence>
        <text evidence="9">Optimum pH is 3.</text>
    </phDependence>
    <temperatureDependence>
        <text evidence="9">Optimum temperature is 50 degrees Celsius (PubMed:3548827). Stable at temperatures below 45 degrees Celsius and completely loses its activity at 65 degrees Celsius (PubMed:3548827).</text>
    </temperatureDependence>
</comment>
<comment type="subcellular location">
    <subcellularLocation>
        <location evidence="17 18">Periplasm</location>
    </subcellularLocation>
</comment>
<comment type="PTM">
    <text evidence="4">Autocatalytically processed.</text>
</comment>
<gene>
    <name type="primary">pcp</name>
</gene>
<organism>
    <name type="scientific">Pseudomonas sp. (strain 101)</name>
    <name type="common">Achromobacter parvulus T1</name>
    <dbReference type="NCBI Taxonomy" id="33067"/>
    <lineage>
        <taxon>Bacteria</taxon>
        <taxon>Pseudomonadati</taxon>
        <taxon>Pseudomonadota</taxon>
    </lineage>
</organism>
<feature type="signal peptide" evidence="1">
    <location>
        <begin position="1"/>
        <end position="32"/>
    </location>
</feature>
<feature type="propeptide" id="PRO_0000027362" description="Removed in mature form" evidence="10">
    <location>
        <begin position="33"/>
        <end position="215"/>
    </location>
</feature>
<feature type="chain" id="PRO_0000027363" description="Sedolisin" evidence="10">
    <location>
        <begin position="216"/>
        <end position="585"/>
    </location>
</feature>
<feature type="propeptide" id="PRO_0000027364" description="Removed in mature form" evidence="10">
    <location>
        <begin position="586"/>
        <end position="587"/>
    </location>
</feature>
<feature type="domain" description="Peptidase S53" evidence="2">
    <location>
        <begin position="219"/>
        <end position="583"/>
    </location>
</feature>
<feature type="region of interest" description="Disordered" evidence="3">
    <location>
        <begin position="276"/>
        <end position="295"/>
    </location>
</feature>
<feature type="active site" description="Charge relay system" evidence="15 16">
    <location>
        <position position="295"/>
    </location>
</feature>
<feature type="active site" description="Charge relay system" evidence="15 16">
    <location>
        <position position="299"/>
    </location>
</feature>
<feature type="active site" description="Charge relay system" evidence="15 16">
    <location>
        <position position="502"/>
    </location>
</feature>
<feature type="binding site" evidence="5 6 19 20 21 22 23 24 25 26">
    <location>
        <position position="543"/>
    </location>
    <ligand>
        <name>Ca(2+)</name>
        <dbReference type="ChEBI" id="CHEBI:29108"/>
    </ligand>
</feature>
<feature type="binding site" evidence="5 6 19 20 21 22 23 24 25 26">
    <location>
        <position position="544"/>
    </location>
    <ligand>
        <name>Ca(2+)</name>
        <dbReference type="ChEBI" id="CHEBI:29108"/>
    </ligand>
</feature>
<feature type="binding site" evidence="5 6 19 20 21 22 23 24 25 26">
    <location>
        <position position="559"/>
    </location>
    <ligand>
        <name>Ca(2+)</name>
        <dbReference type="ChEBI" id="CHEBI:29108"/>
    </ligand>
</feature>
<feature type="binding site" evidence="5 6 19 20 21 22 23 24 25 26">
    <location>
        <position position="561"/>
    </location>
    <ligand>
        <name>Ca(2+)</name>
        <dbReference type="ChEBI" id="CHEBI:29108"/>
    </ligand>
</feature>
<feature type="binding site" evidence="5 6 19 20 21 22 23 24 25 26">
    <location>
        <position position="563"/>
    </location>
    <ligand>
        <name>Ca(2+)</name>
        <dbReference type="ChEBI" id="CHEBI:29108"/>
    </ligand>
</feature>
<feature type="disulfide bond" evidence="19 20 21 22 23 24 25 26">
    <location>
        <begin position="352"/>
        <end position="391"/>
    </location>
</feature>
<feature type="mutagenesis site" description="Retains auto-processing activity but shows only very weak activity with casein as substrate." evidence="4">
    <original>D</original>
    <variation>A</variation>
    <location>
        <position position="299"/>
    </location>
</feature>
<feature type="mutagenesis site" description="Slight decrease in activity with casein as substrate." evidence="4">
    <original>D</original>
    <variation>A</variation>
    <location>
        <position position="339"/>
    </location>
</feature>
<feature type="mutagenesis site" description="Loses both auto-processing activity and proteolytic activity." evidence="4">
    <original>D</original>
    <variation>A</variation>
    <location>
        <position position="385"/>
    </location>
</feature>
<feature type="mutagenesis site" description="No change in activity with casein as substrate." evidence="4">
    <original>E</original>
    <variation>A</variation>
    <location>
        <position position="432"/>
    </location>
</feature>
<feature type="mutagenesis site" description="Loses both auto-processing activity and proteolytic activity." evidence="4">
    <original>E</original>
    <variation>A</variation>
    <location>
        <position position="437"/>
    </location>
</feature>
<feature type="mutagenesis site" description="No change in activity with casein as substrate." evidence="4">
    <original>D</original>
    <variation>A</variation>
    <location>
        <position position="440"/>
    </location>
</feature>
<feature type="mutagenesis site" description="No change in activity with casein as substrate." evidence="4">
    <original>D</original>
    <variation>A</variation>
    <location>
        <position position="480"/>
    </location>
</feature>
<feature type="mutagenesis site" description="Loses both auto-processing activity and proteolytic activity." evidence="4">
    <original>D</original>
    <variation>A</variation>
    <location>
        <position position="543"/>
    </location>
</feature>
<feature type="helix" evidence="27">
    <location>
        <begin position="225"/>
        <end position="227"/>
    </location>
</feature>
<feature type="helix" evidence="27">
    <location>
        <begin position="228"/>
        <end position="231"/>
    </location>
</feature>
<feature type="strand" evidence="27">
    <location>
        <begin position="240"/>
        <end position="252"/>
    </location>
</feature>
<feature type="helix" evidence="27">
    <location>
        <begin position="254"/>
        <end position="266"/>
    </location>
</feature>
<feature type="strand" evidence="27">
    <location>
        <begin position="274"/>
        <end position="278"/>
    </location>
</feature>
<feature type="helix" evidence="27">
    <location>
        <begin position="290"/>
        <end position="306"/>
    </location>
</feature>
<feature type="strand" evidence="27">
    <location>
        <begin position="311"/>
        <end position="319"/>
    </location>
</feature>
<feature type="strand" evidence="28">
    <location>
        <begin position="321"/>
        <end position="324"/>
    </location>
</feature>
<feature type="helix" evidence="27">
    <location>
        <begin position="327"/>
        <end position="339"/>
    </location>
</feature>
<feature type="strand" evidence="27">
    <location>
        <begin position="343"/>
        <end position="347"/>
    </location>
</feature>
<feature type="helix" evidence="27">
    <location>
        <begin position="353"/>
        <end position="358"/>
    </location>
</feature>
<feature type="helix" evidence="27">
    <location>
        <begin position="361"/>
        <end position="374"/>
    </location>
</feature>
<feature type="strand" evidence="27">
    <location>
        <begin position="378"/>
        <end position="382"/>
    </location>
</feature>
<feature type="turn" evidence="27">
    <location>
        <begin position="390"/>
        <end position="395"/>
    </location>
</feature>
<feature type="turn" evidence="27">
    <location>
        <begin position="407"/>
        <end position="409"/>
    </location>
</feature>
<feature type="strand" evidence="27">
    <location>
        <begin position="413"/>
        <end position="423"/>
    </location>
</feature>
<feature type="strand" evidence="27">
    <location>
        <begin position="429"/>
        <end position="434"/>
    </location>
</feature>
<feature type="strand" evidence="27">
    <location>
        <begin position="436"/>
        <end position="439"/>
    </location>
</feature>
<feature type="strand" evidence="27">
    <location>
        <begin position="445"/>
        <end position="447"/>
    </location>
</feature>
<feature type="strand" evidence="27">
    <location>
        <begin position="451"/>
        <end position="457"/>
    </location>
</feature>
<feature type="helix" evidence="27">
    <location>
        <begin position="460"/>
        <end position="464"/>
    </location>
</feature>
<feature type="strand" evidence="27">
    <location>
        <begin position="470"/>
        <end position="474"/>
    </location>
</feature>
<feature type="strand" evidence="27">
    <location>
        <begin position="476"/>
        <end position="480"/>
    </location>
</feature>
<feature type="helix" evidence="27">
    <location>
        <begin position="483"/>
        <end position="485"/>
    </location>
</feature>
<feature type="strand" evidence="27">
    <location>
        <begin position="487"/>
        <end position="491"/>
    </location>
</feature>
<feature type="strand" evidence="27">
    <location>
        <begin position="494"/>
        <end position="498"/>
    </location>
</feature>
<feature type="helix" evidence="27">
    <location>
        <begin position="501"/>
        <end position="518"/>
    </location>
</feature>
<feature type="turn" evidence="27">
    <location>
        <begin position="519"/>
        <end position="521"/>
    </location>
</feature>
<feature type="helix" evidence="27">
    <location>
        <begin position="527"/>
        <end position="536"/>
    </location>
</feature>
<feature type="helix" evidence="27">
    <location>
        <begin position="538"/>
        <end position="540"/>
    </location>
</feature>
<feature type="strand" evidence="27">
    <location>
        <begin position="548"/>
        <end position="551"/>
    </location>
</feature>
<feature type="strand" evidence="27">
    <location>
        <begin position="560"/>
        <end position="563"/>
    </location>
</feature>
<feature type="turn" evidence="27">
    <location>
        <begin position="564"/>
        <end position="566"/>
    </location>
</feature>
<feature type="helix" evidence="27">
    <location>
        <begin position="573"/>
        <end position="583"/>
    </location>
</feature>
<sequence length="587" mass="61073">MKSSAAKQTVLCLNRYAVVALPLAIASFAAFGASPASTLWAPTDTKAFVTPAQVEARSAAPLLELAAGETAHIVVSLKLRDEAQLKQLAQAVNQPGNAQFGKFLKRRQFLSQFAPTEAQVQAVVAHLRKNGFVNIHVVPNRLLISADGSAGAVKAAFNTPLVRYQLNGKAGYANTAPAQVPQDLGEIVGSVLGLQNVTRAHPMLKVGERSAAKTLAAGTAKGHNPTEFPTIYDASSAPTAANTTVGIITIGGVSQTLQDLQQFTSANGLASVNTQTIQTGSSNGDYSDDQQGQGEWDLDSQSIVGSAGGAVQQLLFYMADQSASGNTGLTQAFNQAVSDNVAKVINVSLGWCEADANADGTLQAEDRIFATAAAQGQTFSVSSGDEGVYECNNRGYPDGSTYSVSWPASSPNVIAVGGTTLYTTSAGAYSNETVWNEGLDSNGKLWATGGGYSVYESKPSWQSVVSGTPGRRLLPDISFDAAQGTGALIYNYGQLQQIGGTSLASPIFVGLWARLQSANSNSLGFPAASFYSAISSTPSLVHDVKSGNNGYGGYGYNAGTGWDYPTGWGSLDIAKLSAYIRSNGFGH</sequence>
<dbReference type="EC" id="3.4.21.100"/>
<dbReference type="EMBL" id="D37970">
    <property type="protein sequence ID" value="BAA07188.1"/>
    <property type="molecule type" value="Genomic_DNA"/>
</dbReference>
<dbReference type="PDB" id="1GA1">
    <property type="method" value="X-ray"/>
    <property type="resolution" value="1.40 A"/>
    <property type="chains" value="A=216-587"/>
</dbReference>
<dbReference type="PDB" id="1GA4">
    <property type="method" value="X-ray"/>
    <property type="resolution" value="1.40 A"/>
    <property type="chains" value="A=216-587"/>
</dbReference>
<dbReference type="PDB" id="1GA6">
    <property type="method" value="X-ray"/>
    <property type="resolution" value="1.00 A"/>
    <property type="chains" value="A=216-587"/>
</dbReference>
<dbReference type="PDB" id="1NLU">
    <property type="method" value="X-ray"/>
    <property type="resolution" value="1.30 A"/>
    <property type="chains" value="A=216-585"/>
</dbReference>
<dbReference type="PDB" id="6M8W">
    <property type="method" value="X-ray"/>
    <property type="resolution" value="1.10 A"/>
    <property type="chains" value="A=217-585"/>
</dbReference>
<dbReference type="PDB" id="6M8Y">
    <property type="method" value="X-ray"/>
    <property type="resolution" value="1.10 A"/>
    <property type="chains" value="A=217-585"/>
</dbReference>
<dbReference type="PDB" id="6M9C">
    <property type="method" value="X-ray"/>
    <property type="resolution" value="1.80 A"/>
    <property type="chains" value="A=218-585"/>
</dbReference>
<dbReference type="PDB" id="6M9D">
    <property type="method" value="X-ray"/>
    <property type="resolution" value="2.00 A"/>
    <property type="chains" value="A=218-585"/>
</dbReference>
<dbReference type="PDB" id="6M9F">
    <property type="method" value="X-ray"/>
    <property type="resolution" value="1.30 A"/>
    <property type="chains" value="A=218-585"/>
</dbReference>
<dbReference type="PDBsum" id="1GA1"/>
<dbReference type="PDBsum" id="1GA4"/>
<dbReference type="PDBsum" id="1GA6"/>
<dbReference type="PDBsum" id="1NLU"/>
<dbReference type="PDBsum" id="6M8W"/>
<dbReference type="PDBsum" id="6M8Y"/>
<dbReference type="PDBsum" id="6M9C"/>
<dbReference type="PDBsum" id="6M9D"/>
<dbReference type="PDBsum" id="6M9F"/>
<dbReference type="SMR" id="P42790"/>
<dbReference type="DrugBank" id="DB03660">
    <property type="generic name" value="4-Iodo-L-phenylalanine"/>
</dbReference>
<dbReference type="DrugBank" id="DB03750">
    <property type="generic name" value="Isovaleric Acid"/>
</dbReference>
<dbReference type="DrugBank" id="DB03978">
    <property type="generic name" value="Tyrosinal"/>
</dbReference>
<dbReference type="MEROPS" id="S53.001"/>
<dbReference type="KEGG" id="ag:BAA07188"/>
<dbReference type="BRENDA" id="3.4.21.100">
    <property type="organism ID" value="5085"/>
</dbReference>
<dbReference type="EvolutionaryTrace" id="P42790"/>
<dbReference type="GO" id="GO:0042597">
    <property type="term" value="C:periplasmic space"/>
    <property type="evidence" value="ECO:0007669"/>
    <property type="project" value="UniProtKB-SubCell"/>
</dbReference>
<dbReference type="GO" id="GO:0046872">
    <property type="term" value="F:metal ion binding"/>
    <property type="evidence" value="ECO:0007669"/>
    <property type="project" value="UniProtKB-KW"/>
</dbReference>
<dbReference type="GO" id="GO:0004252">
    <property type="term" value="F:serine-type endopeptidase activity"/>
    <property type="evidence" value="ECO:0007669"/>
    <property type="project" value="InterPro"/>
</dbReference>
<dbReference type="GO" id="GO:0008240">
    <property type="term" value="F:tripeptidyl-peptidase activity"/>
    <property type="evidence" value="ECO:0007669"/>
    <property type="project" value="TreeGrafter"/>
</dbReference>
<dbReference type="GO" id="GO:0006508">
    <property type="term" value="P:proteolysis"/>
    <property type="evidence" value="ECO:0007669"/>
    <property type="project" value="UniProtKB-KW"/>
</dbReference>
<dbReference type="CDD" id="cd04056">
    <property type="entry name" value="Peptidases_S53"/>
    <property type="match status" value="1"/>
</dbReference>
<dbReference type="CDD" id="cd11377">
    <property type="entry name" value="Pro-peptidase_S53"/>
    <property type="match status" value="1"/>
</dbReference>
<dbReference type="Gene3D" id="3.40.50.200">
    <property type="entry name" value="Peptidase S8/S53 domain"/>
    <property type="match status" value="1"/>
</dbReference>
<dbReference type="InterPro" id="IPR000209">
    <property type="entry name" value="Peptidase_S8/S53_dom"/>
</dbReference>
<dbReference type="InterPro" id="IPR036852">
    <property type="entry name" value="Peptidase_S8/S53_dom_sf"/>
</dbReference>
<dbReference type="InterPro" id="IPR023828">
    <property type="entry name" value="Peptidase_S8_Ser-AS"/>
</dbReference>
<dbReference type="InterPro" id="IPR015366">
    <property type="entry name" value="S53_propep"/>
</dbReference>
<dbReference type="InterPro" id="IPR030400">
    <property type="entry name" value="Sedolisin_dom"/>
</dbReference>
<dbReference type="InterPro" id="IPR050819">
    <property type="entry name" value="Tripeptidyl-peptidase_I"/>
</dbReference>
<dbReference type="PANTHER" id="PTHR14218">
    <property type="entry name" value="PROTEASE S8 TRIPEPTIDYL PEPTIDASE I CLN2"/>
    <property type="match status" value="1"/>
</dbReference>
<dbReference type="PANTHER" id="PTHR14218:SF15">
    <property type="entry name" value="TRIPEPTIDYL-PEPTIDASE 1"/>
    <property type="match status" value="1"/>
</dbReference>
<dbReference type="Pfam" id="PF00082">
    <property type="entry name" value="Peptidase_S8"/>
    <property type="match status" value="1"/>
</dbReference>
<dbReference type="Pfam" id="PF09286">
    <property type="entry name" value="Pro-kuma_activ"/>
    <property type="match status" value="1"/>
</dbReference>
<dbReference type="SMART" id="SM00944">
    <property type="entry name" value="Pro-kuma_activ"/>
    <property type="match status" value="1"/>
</dbReference>
<dbReference type="SUPFAM" id="SSF54897">
    <property type="entry name" value="Protease propeptides/inhibitors"/>
    <property type="match status" value="1"/>
</dbReference>
<dbReference type="SUPFAM" id="SSF52743">
    <property type="entry name" value="Subtilisin-like"/>
    <property type="match status" value="1"/>
</dbReference>
<dbReference type="PROSITE" id="PS51695">
    <property type="entry name" value="SEDOLISIN"/>
    <property type="match status" value="1"/>
</dbReference>
<accession>P42790</accession>
<proteinExistence type="evidence at protein level"/>
<keyword id="KW-0002">3D-structure</keyword>
<keyword id="KW-0106">Calcium</keyword>
<keyword id="KW-0903">Direct protein sequencing</keyword>
<keyword id="KW-1015">Disulfide bond</keyword>
<keyword id="KW-0378">Hydrolase</keyword>
<keyword id="KW-0479">Metal-binding</keyword>
<keyword id="KW-0574">Periplasm</keyword>
<keyword id="KW-0645">Protease</keyword>
<keyword id="KW-0720">Serine protease</keyword>
<keyword id="KW-0732">Signal</keyword>
<keyword id="KW-0865">Zymogen</keyword>